<comment type="similarity">
    <text evidence="3">Belongs to the NOP9 family.</text>
</comment>
<comment type="sequence caution" evidence="3">
    <conflict type="erroneous initiation">
        <sequence resource="EMBL-CDS" id="BAB29900"/>
    </conflict>
    <text>Truncated N-terminus.</text>
</comment>
<comment type="sequence caution" evidence="3">
    <conflict type="frameshift">
        <sequence resource="EMBL-CDS" id="BAC34455"/>
    </conflict>
</comment>
<comment type="sequence caution" evidence="3">
    <conflict type="erroneous initiation">
        <sequence resource="EMBL-CDS" id="BAC39042"/>
    </conflict>
    <text>Truncated N-terminus.</text>
</comment>
<accession>Q8BMC4</accession>
<accession>Q3TW87</accession>
<accession>Q8BKR9</accession>
<accession>Q8BYV4</accession>
<accession>Q8VEF9</accession>
<accession>Q9D0C6</accession>
<accession>Q9D5A8</accession>
<organism>
    <name type="scientific">Mus musculus</name>
    <name type="common">Mouse</name>
    <dbReference type="NCBI Taxonomy" id="10090"/>
    <lineage>
        <taxon>Eukaryota</taxon>
        <taxon>Metazoa</taxon>
        <taxon>Chordata</taxon>
        <taxon>Craniata</taxon>
        <taxon>Vertebrata</taxon>
        <taxon>Euteleostomi</taxon>
        <taxon>Mammalia</taxon>
        <taxon>Eutheria</taxon>
        <taxon>Euarchontoglires</taxon>
        <taxon>Glires</taxon>
        <taxon>Rodentia</taxon>
        <taxon>Myomorpha</taxon>
        <taxon>Muroidea</taxon>
        <taxon>Muridae</taxon>
        <taxon>Murinae</taxon>
        <taxon>Mus</taxon>
        <taxon>Mus</taxon>
    </lineage>
</organism>
<gene>
    <name type="primary">Nop9</name>
</gene>
<name>NOP9_MOUSE</name>
<feature type="chain" id="PRO_0000075928" description="Nucleolar protein 9">
    <location>
        <begin position="1"/>
        <end position="636"/>
    </location>
</feature>
<feature type="repeat" description="Pumilio 1">
    <location>
        <begin position="92"/>
        <end position="123"/>
    </location>
</feature>
<feature type="repeat" description="Pumilio 2">
    <location>
        <begin position="189"/>
        <end position="223"/>
    </location>
</feature>
<feature type="repeat" description="Pumilio 3">
    <location>
        <begin position="313"/>
        <end position="348"/>
    </location>
</feature>
<feature type="repeat" description="Pumilio 4">
    <location>
        <begin position="351"/>
        <end position="386"/>
    </location>
</feature>
<feature type="repeat" description="Pumilio 5">
    <location>
        <begin position="509"/>
        <end position="544"/>
    </location>
</feature>
<feature type="repeat" description="Pumilio 6">
    <location>
        <begin position="547"/>
        <end position="581"/>
    </location>
</feature>
<feature type="region of interest" description="Disordered" evidence="2">
    <location>
        <begin position="1"/>
        <end position="41"/>
    </location>
</feature>
<feature type="region of interest" description="Disordered" evidence="2">
    <location>
        <begin position="222"/>
        <end position="242"/>
    </location>
</feature>
<feature type="compositionally biased region" description="Low complexity" evidence="2">
    <location>
        <begin position="25"/>
        <end position="41"/>
    </location>
</feature>
<feature type="compositionally biased region" description="Polar residues" evidence="2">
    <location>
        <begin position="228"/>
        <end position="237"/>
    </location>
</feature>
<feature type="modified residue" description="Phosphoserine" evidence="1">
    <location>
        <position position="7"/>
    </location>
</feature>
<feature type="sequence conflict" description="In Ref. 1; BAB29900/BAC39042." evidence="3" ref="1">
    <original>A</original>
    <variation>P</variation>
    <location>
        <position position="61"/>
    </location>
</feature>
<feature type="sequence conflict" description="In Ref. 1; BAC34455." evidence="3" ref="1">
    <original>L</original>
    <variation>V</variation>
    <location>
        <position position="110"/>
    </location>
</feature>
<feature type="sequence conflict" description="In Ref. 1; BAB27705." evidence="3" ref="1">
    <original>P</original>
    <variation>Q</variation>
    <location>
        <position position="402"/>
    </location>
</feature>
<feature type="sequence conflict" description="In Ref. 2; AAH18523." evidence="3" ref="2">
    <original>L</original>
    <variation>V</variation>
    <location>
        <position position="503"/>
    </location>
</feature>
<feature type="sequence conflict" description="In Ref. 1; BAB27705." evidence="3" ref="1">
    <original>H</original>
    <variation>N</variation>
    <location>
        <position position="525"/>
    </location>
</feature>
<feature type="sequence conflict" description="In Ref. 1; BAC29882." evidence="3" ref="1">
    <original>D</original>
    <variation>Y</variation>
    <location>
        <position position="566"/>
    </location>
</feature>
<dbReference type="EMBL" id="AK011570">
    <property type="protein sequence ID" value="BAB27705.1"/>
    <property type="molecule type" value="mRNA"/>
</dbReference>
<dbReference type="EMBL" id="AK015585">
    <property type="protein sequence ID" value="BAB29900.1"/>
    <property type="status" value="ALT_INIT"/>
    <property type="molecule type" value="mRNA"/>
</dbReference>
<dbReference type="EMBL" id="AK032873">
    <property type="protein sequence ID" value="BAC28064.1"/>
    <property type="molecule type" value="mRNA"/>
</dbReference>
<dbReference type="EMBL" id="AK037831">
    <property type="protein sequence ID" value="BAC29882.1"/>
    <property type="molecule type" value="mRNA"/>
</dbReference>
<dbReference type="EMBL" id="AK050912">
    <property type="protein sequence ID" value="BAC34455.1"/>
    <property type="status" value="ALT_FRAME"/>
    <property type="molecule type" value="mRNA"/>
</dbReference>
<dbReference type="EMBL" id="AK083861">
    <property type="protein sequence ID" value="BAC39042.1"/>
    <property type="status" value="ALT_INIT"/>
    <property type="molecule type" value="mRNA"/>
</dbReference>
<dbReference type="EMBL" id="AK146020">
    <property type="protein sequence ID" value="BAE26838.1"/>
    <property type="molecule type" value="mRNA"/>
</dbReference>
<dbReference type="EMBL" id="AK159798">
    <property type="protein sequence ID" value="BAE35379.1"/>
    <property type="molecule type" value="mRNA"/>
</dbReference>
<dbReference type="EMBL" id="BC018523">
    <property type="protein sequence ID" value="AAH18523.1"/>
    <property type="molecule type" value="mRNA"/>
</dbReference>
<dbReference type="CCDS" id="CCDS27126.1"/>
<dbReference type="RefSeq" id="NP_080679.3">
    <property type="nucleotide sequence ID" value="NM_026403.3"/>
</dbReference>
<dbReference type="SMR" id="Q8BMC4"/>
<dbReference type="BioGRID" id="212472">
    <property type="interactions" value="2"/>
</dbReference>
<dbReference type="FunCoup" id="Q8BMC4">
    <property type="interactions" value="2673"/>
</dbReference>
<dbReference type="IntAct" id="Q8BMC4">
    <property type="interactions" value="1"/>
</dbReference>
<dbReference type="STRING" id="10090.ENSMUSP00000019441"/>
<dbReference type="GlyGen" id="Q8BMC4">
    <property type="glycosylation" value="1 site, 1 N-linked glycan (1 site)"/>
</dbReference>
<dbReference type="iPTMnet" id="Q8BMC4"/>
<dbReference type="PhosphoSitePlus" id="Q8BMC4"/>
<dbReference type="PaxDb" id="10090-ENSMUSP00000019441"/>
<dbReference type="ProteomicsDB" id="295503"/>
<dbReference type="Pumba" id="Q8BMC4"/>
<dbReference type="Antibodypedia" id="74">
    <property type="antibodies" value="34 antibodies from 12 providers"/>
</dbReference>
<dbReference type="Ensembl" id="ENSMUST00000019441.9">
    <property type="protein sequence ID" value="ENSMUSP00000019441.9"/>
    <property type="gene ID" value="ENSMUSG00000019297.10"/>
</dbReference>
<dbReference type="GeneID" id="67842"/>
<dbReference type="KEGG" id="mmu:67842"/>
<dbReference type="UCSC" id="uc007uao.2">
    <property type="organism name" value="mouse"/>
</dbReference>
<dbReference type="AGR" id="MGI:1915092"/>
<dbReference type="CTD" id="161424"/>
<dbReference type="MGI" id="MGI:1915092">
    <property type="gene designation" value="Nop9"/>
</dbReference>
<dbReference type="VEuPathDB" id="HostDB:ENSMUSG00000019297"/>
<dbReference type="eggNOG" id="KOG2188">
    <property type="taxonomic scope" value="Eukaryota"/>
</dbReference>
<dbReference type="GeneTree" id="ENSGT00390000004964"/>
<dbReference type="HOGENOM" id="CLU_029199_1_0_1"/>
<dbReference type="InParanoid" id="Q8BMC4"/>
<dbReference type="OMA" id="HHLVRNF"/>
<dbReference type="OrthoDB" id="9987665at2759"/>
<dbReference type="PhylomeDB" id="Q8BMC4"/>
<dbReference type="TreeFam" id="TF327254"/>
<dbReference type="BioGRID-ORCS" id="67842">
    <property type="hits" value="21 hits in 77 CRISPR screens"/>
</dbReference>
<dbReference type="ChiTaRS" id="Nop9">
    <property type="organism name" value="mouse"/>
</dbReference>
<dbReference type="PRO" id="PR:Q8BMC4"/>
<dbReference type="Proteomes" id="UP000000589">
    <property type="component" value="Chromosome 14"/>
</dbReference>
<dbReference type="RNAct" id="Q8BMC4">
    <property type="molecule type" value="protein"/>
</dbReference>
<dbReference type="Bgee" id="ENSMUSG00000019297">
    <property type="expression patterns" value="Expressed in spermatocyte and 242 other cell types or tissues"/>
</dbReference>
<dbReference type="GO" id="GO:0003723">
    <property type="term" value="F:RNA binding"/>
    <property type="evidence" value="ECO:0007669"/>
    <property type="project" value="UniProtKB-KW"/>
</dbReference>
<dbReference type="Gene3D" id="1.25.10.10">
    <property type="entry name" value="Leucine-rich Repeat Variant"/>
    <property type="match status" value="2"/>
</dbReference>
<dbReference type="InterPro" id="IPR011989">
    <property type="entry name" value="ARM-like"/>
</dbReference>
<dbReference type="InterPro" id="IPR016024">
    <property type="entry name" value="ARM-type_fold"/>
</dbReference>
<dbReference type="InterPro" id="IPR040000">
    <property type="entry name" value="NOP9"/>
</dbReference>
<dbReference type="InterPro" id="IPR001313">
    <property type="entry name" value="Pumilio_RNA-bd_rpt"/>
</dbReference>
<dbReference type="PANTHER" id="PTHR13102">
    <property type="entry name" value="NUCLEOLAR PROTEIN 9"/>
    <property type="match status" value="1"/>
</dbReference>
<dbReference type="PANTHER" id="PTHR13102:SF0">
    <property type="entry name" value="NUCLEOLAR PROTEIN 9"/>
    <property type="match status" value="1"/>
</dbReference>
<dbReference type="Pfam" id="PF22493">
    <property type="entry name" value="PUF_NOP9"/>
    <property type="match status" value="1"/>
</dbReference>
<dbReference type="SMART" id="SM00025">
    <property type="entry name" value="Pumilio"/>
    <property type="match status" value="5"/>
</dbReference>
<dbReference type="SUPFAM" id="SSF48371">
    <property type="entry name" value="ARM repeat"/>
    <property type="match status" value="2"/>
</dbReference>
<sequence>MGLGPRSAHKARRQFSGAGRRGRAARGSGRPPPGRDGYPRLPAAARAEQAPEALPHLSPEALGYFRRALSALKVAPDAAEERELMARNILKEVEAQALALATNRTGSEMLQELLGFSPLKPLCRVWAALRPNLRFVACHRCGVHVLQSALLQLPRLLRRPAEAEEEEEEEEEGGPSQTLEELVLGLAAEVCDDFLFFCGDTHGSFVVRTLLQVLGGTLLESERGKPRGSQSSETQRTSARECKPTDFEVPKTFLNRLQDLSACFLKDIAVFITDKISSFCLQVALQVLHQKLPQHCAHLCDAVIDYLSSRNSSADGSPLLLFLRDQTSSRLLEQVLLVLEAERLQRLYKDHFQGQLCSLAEHPIANFPLQRLLDAITSPELLSLVFEELSPALEMVLAQGHPGVVVALVEACRRVGTHQAQVLQLLFEAFHCAEPPSRQAACVPLFAALLAYEVYYELMEEEGAVPAEHQVEMATARALREVTVLGSLLLQHLLYFSNPGLVLRSLSALTGPQLLTLAQSPAGSHVFDAILSSPSVTHKQRRRVLKTLKGQYVALACSRHGSRVLDAIWSGAALGARKEIAAELGEKNQELIQDPFGHHVARNVALTTFLKRREAWEQQQSTVAKRRRALSSILED</sequence>
<protein>
    <recommendedName>
        <fullName>Nucleolar protein 9</fullName>
    </recommendedName>
    <alternativeName>
        <fullName>Pumilio domain-containing protein NOP9</fullName>
    </alternativeName>
</protein>
<keyword id="KW-0597">Phosphoprotein</keyword>
<keyword id="KW-1185">Reference proteome</keyword>
<keyword id="KW-0677">Repeat</keyword>
<keyword id="KW-0694">RNA-binding</keyword>
<reference key="1">
    <citation type="journal article" date="2005" name="Science">
        <title>The transcriptional landscape of the mammalian genome.</title>
        <authorList>
            <person name="Carninci P."/>
            <person name="Kasukawa T."/>
            <person name="Katayama S."/>
            <person name="Gough J."/>
            <person name="Frith M.C."/>
            <person name="Maeda N."/>
            <person name="Oyama R."/>
            <person name="Ravasi T."/>
            <person name="Lenhard B."/>
            <person name="Wells C."/>
            <person name="Kodzius R."/>
            <person name="Shimokawa K."/>
            <person name="Bajic V.B."/>
            <person name="Brenner S.E."/>
            <person name="Batalov S."/>
            <person name="Forrest A.R."/>
            <person name="Zavolan M."/>
            <person name="Davis M.J."/>
            <person name="Wilming L.G."/>
            <person name="Aidinis V."/>
            <person name="Allen J.E."/>
            <person name="Ambesi-Impiombato A."/>
            <person name="Apweiler R."/>
            <person name="Aturaliya R.N."/>
            <person name="Bailey T.L."/>
            <person name="Bansal M."/>
            <person name="Baxter L."/>
            <person name="Beisel K.W."/>
            <person name="Bersano T."/>
            <person name="Bono H."/>
            <person name="Chalk A.M."/>
            <person name="Chiu K.P."/>
            <person name="Choudhary V."/>
            <person name="Christoffels A."/>
            <person name="Clutterbuck D.R."/>
            <person name="Crowe M.L."/>
            <person name="Dalla E."/>
            <person name="Dalrymple B.P."/>
            <person name="de Bono B."/>
            <person name="Della Gatta G."/>
            <person name="di Bernardo D."/>
            <person name="Down T."/>
            <person name="Engstrom P."/>
            <person name="Fagiolini M."/>
            <person name="Faulkner G."/>
            <person name="Fletcher C.F."/>
            <person name="Fukushima T."/>
            <person name="Furuno M."/>
            <person name="Futaki S."/>
            <person name="Gariboldi M."/>
            <person name="Georgii-Hemming P."/>
            <person name="Gingeras T.R."/>
            <person name="Gojobori T."/>
            <person name="Green R.E."/>
            <person name="Gustincich S."/>
            <person name="Harbers M."/>
            <person name="Hayashi Y."/>
            <person name="Hensch T.K."/>
            <person name="Hirokawa N."/>
            <person name="Hill D."/>
            <person name="Huminiecki L."/>
            <person name="Iacono M."/>
            <person name="Ikeo K."/>
            <person name="Iwama A."/>
            <person name="Ishikawa T."/>
            <person name="Jakt M."/>
            <person name="Kanapin A."/>
            <person name="Katoh M."/>
            <person name="Kawasawa Y."/>
            <person name="Kelso J."/>
            <person name="Kitamura H."/>
            <person name="Kitano H."/>
            <person name="Kollias G."/>
            <person name="Krishnan S.P."/>
            <person name="Kruger A."/>
            <person name="Kummerfeld S.K."/>
            <person name="Kurochkin I.V."/>
            <person name="Lareau L.F."/>
            <person name="Lazarevic D."/>
            <person name="Lipovich L."/>
            <person name="Liu J."/>
            <person name="Liuni S."/>
            <person name="McWilliam S."/>
            <person name="Madan Babu M."/>
            <person name="Madera M."/>
            <person name="Marchionni L."/>
            <person name="Matsuda H."/>
            <person name="Matsuzawa S."/>
            <person name="Miki H."/>
            <person name="Mignone F."/>
            <person name="Miyake S."/>
            <person name="Morris K."/>
            <person name="Mottagui-Tabar S."/>
            <person name="Mulder N."/>
            <person name="Nakano N."/>
            <person name="Nakauchi H."/>
            <person name="Ng P."/>
            <person name="Nilsson R."/>
            <person name="Nishiguchi S."/>
            <person name="Nishikawa S."/>
            <person name="Nori F."/>
            <person name="Ohara O."/>
            <person name="Okazaki Y."/>
            <person name="Orlando V."/>
            <person name="Pang K.C."/>
            <person name="Pavan W.J."/>
            <person name="Pavesi G."/>
            <person name="Pesole G."/>
            <person name="Petrovsky N."/>
            <person name="Piazza S."/>
            <person name="Reed J."/>
            <person name="Reid J.F."/>
            <person name="Ring B.Z."/>
            <person name="Ringwald M."/>
            <person name="Rost B."/>
            <person name="Ruan Y."/>
            <person name="Salzberg S.L."/>
            <person name="Sandelin A."/>
            <person name="Schneider C."/>
            <person name="Schoenbach C."/>
            <person name="Sekiguchi K."/>
            <person name="Semple C.A."/>
            <person name="Seno S."/>
            <person name="Sessa L."/>
            <person name="Sheng Y."/>
            <person name="Shibata Y."/>
            <person name="Shimada H."/>
            <person name="Shimada K."/>
            <person name="Silva D."/>
            <person name="Sinclair B."/>
            <person name="Sperling S."/>
            <person name="Stupka E."/>
            <person name="Sugiura K."/>
            <person name="Sultana R."/>
            <person name="Takenaka Y."/>
            <person name="Taki K."/>
            <person name="Tammoja K."/>
            <person name="Tan S.L."/>
            <person name="Tang S."/>
            <person name="Taylor M.S."/>
            <person name="Tegner J."/>
            <person name="Teichmann S.A."/>
            <person name="Ueda H.R."/>
            <person name="van Nimwegen E."/>
            <person name="Verardo R."/>
            <person name="Wei C.L."/>
            <person name="Yagi K."/>
            <person name="Yamanishi H."/>
            <person name="Zabarovsky E."/>
            <person name="Zhu S."/>
            <person name="Zimmer A."/>
            <person name="Hide W."/>
            <person name="Bult C."/>
            <person name="Grimmond S.M."/>
            <person name="Teasdale R.D."/>
            <person name="Liu E.T."/>
            <person name="Brusic V."/>
            <person name="Quackenbush J."/>
            <person name="Wahlestedt C."/>
            <person name="Mattick J.S."/>
            <person name="Hume D.A."/>
            <person name="Kai C."/>
            <person name="Sasaki D."/>
            <person name="Tomaru Y."/>
            <person name="Fukuda S."/>
            <person name="Kanamori-Katayama M."/>
            <person name="Suzuki M."/>
            <person name="Aoki J."/>
            <person name="Arakawa T."/>
            <person name="Iida J."/>
            <person name="Imamura K."/>
            <person name="Itoh M."/>
            <person name="Kato T."/>
            <person name="Kawaji H."/>
            <person name="Kawagashira N."/>
            <person name="Kawashima T."/>
            <person name="Kojima M."/>
            <person name="Kondo S."/>
            <person name="Konno H."/>
            <person name="Nakano K."/>
            <person name="Ninomiya N."/>
            <person name="Nishio T."/>
            <person name="Okada M."/>
            <person name="Plessy C."/>
            <person name="Shibata K."/>
            <person name="Shiraki T."/>
            <person name="Suzuki S."/>
            <person name="Tagami M."/>
            <person name="Waki K."/>
            <person name="Watahiki A."/>
            <person name="Okamura-Oho Y."/>
            <person name="Suzuki H."/>
            <person name="Kawai J."/>
            <person name="Hayashizaki Y."/>
        </authorList>
    </citation>
    <scope>NUCLEOTIDE SEQUENCE [LARGE SCALE MRNA]</scope>
    <source>
        <strain>C57BL/6J</strain>
        <tissue>Embryo</tissue>
        <tissue>Mesonephros</tissue>
        <tissue>Placenta</tissue>
        <tissue>Testis</tissue>
        <tissue>Thymus</tissue>
    </source>
</reference>
<reference key="2">
    <citation type="journal article" date="2004" name="Genome Res.">
        <title>The status, quality, and expansion of the NIH full-length cDNA project: the Mammalian Gene Collection (MGC).</title>
        <authorList>
            <consortium name="The MGC Project Team"/>
        </authorList>
    </citation>
    <scope>NUCLEOTIDE SEQUENCE [LARGE SCALE MRNA]</scope>
    <source>
        <tissue>Mammary tumor</tissue>
    </source>
</reference>
<reference key="3">
    <citation type="journal article" date="2010" name="Cell">
        <title>A tissue-specific atlas of mouse protein phosphorylation and expression.</title>
        <authorList>
            <person name="Huttlin E.L."/>
            <person name="Jedrychowski M.P."/>
            <person name="Elias J.E."/>
            <person name="Goswami T."/>
            <person name="Rad R."/>
            <person name="Beausoleil S.A."/>
            <person name="Villen J."/>
            <person name="Haas W."/>
            <person name="Sowa M.E."/>
            <person name="Gygi S.P."/>
        </authorList>
    </citation>
    <scope>IDENTIFICATION BY MASS SPECTROMETRY [LARGE SCALE ANALYSIS]</scope>
    <source>
        <tissue>Spleen</tissue>
        <tissue>Testis</tissue>
    </source>
</reference>
<evidence type="ECO:0000250" key="1">
    <source>
        <dbReference type="UniProtKB" id="Q86U38"/>
    </source>
</evidence>
<evidence type="ECO:0000256" key="2">
    <source>
        <dbReference type="SAM" id="MobiDB-lite"/>
    </source>
</evidence>
<evidence type="ECO:0000305" key="3"/>
<proteinExistence type="evidence at protein level"/>